<feature type="chain" id="PRO_0000232483" description="Uncharacterized N-acetyltransferase SAR1152">
    <location>
        <begin position="1"/>
        <end position="146"/>
    </location>
</feature>
<feature type="domain" description="N-acetyltransferase">
    <location>
        <begin position="7"/>
        <end position="146"/>
    </location>
</feature>
<gene>
    <name type="ordered locus">SAR1152</name>
</gene>
<dbReference type="EC" id="2.3.1.-"/>
<dbReference type="EMBL" id="BX571856">
    <property type="protein sequence ID" value="CAG40154.1"/>
    <property type="molecule type" value="Genomic_DNA"/>
</dbReference>
<dbReference type="RefSeq" id="WP_001289711.1">
    <property type="nucleotide sequence ID" value="NC_002952.2"/>
</dbReference>
<dbReference type="SMR" id="Q6GHQ9"/>
<dbReference type="KEGG" id="sar:SAR1152"/>
<dbReference type="HOGENOM" id="CLU_136634_0_0_9"/>
<dbReference type="Proteomes" id="UP000000596">
    <property type="component" value="Chromosome"/>
</dbReference>
<dbReference type="GO" id="GO:0016747">
    <property type="term" value="F:acyltransferase activity, transferring groups other than amino-acyl groups"/>
    <property type="evidence" value="ECO:0007669"/>
    <property type="project" value="UniProtKB-UniRule"/>
</dbReference>
<dbReference type="CDD" id="cd04301">
    <property type="entry name" value="NAT_SF"/>
    <property type="match status" value="1"/>
</dbReference>
<dbReference type="Gene3D" id="3.40.630.30">
    <property type="match status" value="1"/>
</dbReference>
<dbReference type="HAMAP" id="MF_00824">
    <property type="entry name" value="Acetyltransf_YlbP"/>
    <property type="match status" value="1"/>
</dbReference>
<dbReference type="InterPro" id="IPR016181">
    <property type="entry name" value="Acyl_CoA_acyltransferase"/>
</dbReference>
<dbReference type="InterPro" id="IPR000182">
    <property type="entry name" value="GNAT_dom"/>
</dbReference>
<dbReference type="InterPro" id="IPR017274">
    <property type="entry name" value="YlbP"/>
</dbReference>
<dbReference type="NCBIfam" id="NF010241">
    <property type="entry name" value="PRK13688.1"/>
    <property type="match status" value="1"/>
</dbReference>
<dbReference type="PIRSF" id="PIRSF037732">
    <property type="entry name" value="YlbP_prd"/>
    <property type="match status" value="1"/>
</dbReference>
<dbReference type="SUPFAM" id="SSF55729">
    <property type="entry name" value="Acyl-CoA N-acyltransferases (Nat)"/>
    <property type="match status" value="1"/>
</dbReference>
<dbReference type="PROSITE" id="PS51186">
    <property type="entry name" value="GNAT"/>
    <property type="match status" value="1"/>
</dbReference>
<sequence length="146" mass="17002">MSEIKRLEINYKTDELFENFRAFGNKDLYMVNELNGQMIDASSDSPFYGIFVGDQLGARMALLKKGDVEEIYFPDFEDYILLWKLEVLPKYQNRGYASELIDFAKSFNMPIKAIGRNDSKDFFLHHGFTDVEAKNIEGHDVLLWKP</sequence>
<proteinExistence type="inferred from homology"/>
<organism>
    <name type="scientific">Staphylococcus aureus (strain MRSA252)</name>
    <dbReference type="NCBI Taxonomy" id="282458"/>
    <lineage>
        <taxon>Bacteria</taxon>
        <taxon>Bacillati</taxon>
        <taxon>Bacillota</taxon>
        <taxon>Bacilli</taxon>
        <taxon>Bacillales</taxon>
        <taxon>Staphylococcaceae</taxon>
        <taxon>Staphylococcus</taxon>
    </lineage>
</organism>
<keyword id="KW-0012">Acyltransferase</keyword>
<keyword id="KW-0808">Transferase</keyword>
<name>Y1152_STAAR</name>
<accession>Q6GHQ9</accession>
<protein>
    <recommendedName>
        <fullName>Uncharacterized N-acetyltransferase SAR1152</fullName>
        <ecNumber>2.3.1.-</ecNumber>
    </recommendedName>
</protein>
<reference key="1">
    <citation type="journal article" date="2004" name="Proc. Natl. Acad. Sci. U.S.A.">
        <title>Complete genomes of two clinical Staphylococcus aureus strains: evidence for the rapid evolution of virulence and drug resistance.</title>
        <authorList>
            <person name="Holden M.T.G."/>
            <person name="Feil E.J."/>
            <person name="Lindsay J.A."/>
            <person name="Peacock S.J."/>
            <person name="Day N.P.J."/>
            <person name="Enright M.C."/>
            <person name="Foster T.J."/>
            <person name="Moore C.E."/>
            <person name="Hurst L."/>
            <person name="Atkin R."/>
            <person name="Barron A."/>
            <person name="Bason N."/>
            <person name="Bentley S.D."/>
            <person name="Chillingworth C."/>
            <person name="Chillingworth T."/>
            <person name="Churcher C."/>
            <person name="Clark L."/>
            <person name="Corton C."/>
            <person name="Cronin A."/>
            <person name="Doggett J."/>
            <person name="Dowd L."/>
            <person name="Feltwell T."/>
            <person name="Hance Z."/>
            <person name="Harris B."/>
            <person name="Hauser H."/>
            <person name="Holroyd S."/>
            <person name="Jagels K."/>
            <person name="James K.D."/>
            <person name="Lennard N."/>
            <person name="Line A."/>
            <person name="Mayes R."/>
            <person name="Moule S."/>
            <person name="Mungall K."/>
            <person name="Ormond D."/>
            <person name="Quail M.A."/>
            <person name="Rabbinowitsch E."/>
            <person name="Rutherford K.M."/>
            <person name="Sanders M."/>
            <person name="Sharp S."/>
            <person name="Simmonds M."/>
            <person name="Stevens K."/>
            <person name="Whitehead S."/>
            <person name="Barrell B.G."/>
            <person name="Spratt B.G."/>
            <person name="Parkhill J."/>
        </authorList>
    </citation>
    <scope>NUCLEOTIDE SEQUENCE [LARGE SCALE GENOMIC DNA]</scope>
    <source>
        <strain>MRSA252</strain>
    </source>
</reference>